<organism>
    <name type="scientific">Helicobacter hepaticus (strain ATCC 51449 / 3B1)</name>
    <dbReference type="NCBI Taxonomy" id="235279"/>
    <lineage>
        <taxon>Bacteria</taxon>
        <taxon>Pseudomonadati</taxon>
        <taxon>Campylobacterota</taxon>
        <taxon>Epsilonproteobacteria</taxon>
        <taxon>Campylobacterales</taxon>
        <taxon>Helicobacteraceae</taxon>
        <taxon>Helicobacter</taxon>
    </lineage>
</organism>
<comment type="function">
    <text evidence="1">Catalyzes the conversion of GTP to 2,5-diamino-6-ribosylamino-4(3H)-pyrimidinone 5'-phosphate (DARP), formate and pyrophosphate.</text>
</comment>
<comment type="catalytic activity">
    <reaction evidence="1">
        <text>GTP + 4 H2O = 2,5-diamino-6-hydroxy-4-(5-phosphoribosylamino)-pyrimidine + formate + 2 phosphate + 3 H(+)</text>
        <dbReference type="Rhea" id="RHEA:23704"/>
        <dbReference type="ChEBI" id="CHEBI:15377"/>
        <dbReference type="ChEBI" id="CHEBI:15378"/>
        <dbReference type="ChEBI" id="CHEBI:15740"/>
        <dbReference type="ChEBI" id="CHEBI:37565"/>
        <dbReference type="ChEBI" id="CHEBI:43474"/>
        <dbReference type="ChEBI" id="CHEBI:58614"/>
        <dbReference type="EC" id="3.5.4.25"/>
    </reaction>
</comment>
<comment type="cofactor">
    <cofactor evidence="1">
        <name>Zn(2+)</name>
        <dbReference type="ChEBI" id="CHEBI:29105"/>
    </cofactor>
    <text evidence="1">Binds 1 zinc ion per subunit.</text>
</comment>
<comment type="pathway">
    <text evidence="1">Cofactor biosynthesis; riboflavin biosynthesis; 5-amino-6-(D-ribitylamino)uracil from GTP: step 1/4.</text>
</comment>
<comment type="similarity">
    <text evidence="1">Belongs to the GTP cyclohydrolase II family.</text>
</comment>
<keyword id="KW-0342">GTP-binding</keyword>
<keyword id="KW-0378">Hydrolase</keyword>
<keyword id="KW-0479">Metal-binding</keyword>
<keyword id="KW-0547">Nucleotide-binding</keyword>
<keyword id="KW-1185">Reference proteome</keyword>
<keyword id="KW-0686">Riboflavin biosynthesis</keyword>
<keyword id="KW-0862">Zinc</keyword>
<feature type="chain" id="PRO_0000151760" description="GTP cyclohydrolase-2">
    <location>
        <begin position="1"/>
        <end position="194"/>
    </location>
</feature>
<feature type="active site" description="Proton acceptor" evidence="1">
    <location>
        <position position="128"/>
    </location>
</feature>
<feature type="active site" description="Nucleophile" evidence="1">
    <location>
        <position position="130"/>
    </location>
</feature>
<feature type="binding site" evidence="1">
    <location>
        <begin position="50"/>
        <end position="54"/>
    </location>
    <ligand>
        <name>GTP</name>
        <dbReference type="ChEBI" id="CHEBI:37565"/>
    </ligand>
</feature>
<feature type="binding site" evidence="1">
    <location>
        <position position="55"/>
    </location>
    <ligand>
        <name>Zn(2+)</name>
        <dbReference type="ChEBI" id="CHEBI:29105"/>
        <note>catalytic</note>
    </ligand>
</feature>
<feature type="binding site" evidence="1">
    <location>
        <position position="66"/>
    </location>
    <ligand>
        <name>Zn(2+)</name>
        <dbReference type="ChEBI" id="CHEBI:29105"/>
        <note>catalytic</note>
    </ligand>
</feature>
<feature type="binding site" evidence="1">
    <location>
        <position position="68"/>
    </location>
    <ligand>
        <name>Zn(2+)</name>
        <dbReference type="ChEBI" id="CHEBI:29105"/>
        <note>catalytic</note>
    </ligand>
</feature>
<feature type="binding site" evidence="1">
    <location>
        <begin position="94"/>
        <end position="96"/>
    </location>
    <ligand>
        <name>GTP</name>
        <dbReference type="ChEBI" id="CHEBI:37565"/>
    </ligand>
</feature>
<feature type="binding site" evidence="1">
    <location>
        <position position="116"/>
    </location>
    <ligand>
        <name>GTP</name>
        <dbReference type="ChEBI" id="CHEBI:37565"/>
    </ligand>
</feature>
<feature type="binding site" evidence="1">
    <location>
        <position position="151"/>
    </location>
    <ligand>
        <name>GTP</name>
        <dbReference type="ChEBI" id="CHEBI:37565"/>
    </ligand>
</feature>
<feature type="binding site" evidence="1">
    <location>
        <position position="156"/>
    </location>
    <ligand>
        <name>GTP</name>
        <dbReference type="ChEBI" id="CHEBI:37565"/>
    </ligand>
</feature>
<protein>
    <recommendedName>
        <fullName evidence="1">GTP cyclohydrolase-2</fullName>
        <ecNumber evidence="1">3.5.4.25</ecNumber>
    </recommendedName>
    <alternativeName>
        <fullName evidence="1">GTP cyclohydrolase II</fullName>
    </alternativeName>
</protein>
<dbReference type="EC" id="3.5.4.25" evidence="1"/>
<dbReference type="EMBL" id="AE017125">
    <property type="protein sequence ID" value="AAP76641.1"/>
    <property type="molecule type" value="Genomic_DNA"/>
</dbReference>
<dbReference type="SMR" id="Q7VK48"/>
<dbReference type="STRING" id="235279.HH_0044"/>
<dbReference type="KEGG" id="hhe:HH_0044"/>
<dbReference type="eggNOG" id="COG0807">
    <property type="taxonomic scope" value="Bacteria"/>
</dbReference>
<dbReference type="HOGENOM" id="CLU_020273_2_1_7"/>
<dbReference type="UniPathway" id="UPA00275">
    <property type="reaction ID" value="UER00400"/>
</dbReference>
<dbReference type="Proteomes" id="UP000002495">
    <property type="component" value="Chromosome"/>
</dbReference>
<dbReference type="GO" id="GO:0005829">
    <property type="term" value="C:cytosol"/>
    <property type="evidence" value="ECO:0007669"/>
    <property type="project" value="TreeGrafter"/>
</dbReference>
<dbReference type="GO" id="GO:0005525">
    <property type="term" value="F:GTP binding"/>
    <property type="evidence" value="ECO:0007669"/>
    <property type="project" value="UniProtKB-KW"/>
</dbReference>
<dbReference type="GO" id="GO:0003935">
    <property type="term" value="F:GTP cyclohydrolase II activity"/>
    <property type="evidence" value="ECO:0007669"/>
    <property type="project" value="UniProtKB-UniRule"/>
</dbReference>
<dbReference type="GO" id="GO:0008270">
    <property type="term" value="F:zinc ion binding"/>
    <property type="evidence" value="ECO:0007669"/>
    <property type="project" value="UniProtKB-UniRule"/>
</dbReference>
<dbReference type="GO" id="GO:0009231">
    <property type="term" value="P:riboflavin biosynthetic process"/>
    <property type="evidence" value="ECO:0007669"/>
    <property type="project" value="UniProtKB-UniRule"/>
</dbReference>
<dbReference type="CDD" id="cd00641">
    <property type="entry name" value="GTP_cyclohydro2"/>
    <property type="match status" value="1"/>
</dbReference>
<dbReference type="FunFam" id="3.40.50.10990:FF:000002">
    <property type="entry name" value="GTP cyclohydrolase-2"/>
    <property type="match status" value="1"/>
</dbReference>
<dbReference type="Gene3D" id="3.40.50.10990">
    <property type="entry name" value="GTP cyclohydrolase II"/>
    <property type="match status" value="1"/>
</dbReference>
<dbReference type="HAMAP" id="MF_00179">
    <property type="entry name" value="RibA"/>
    <property type="match status" value="1"/>
</dbReference>
<dbReference type="InterPro" id="IPR032677">
    <property type="entry name" value="GTP_cyclohydro_II"/>
</dbReference>
<dbReference type="InterPro" id="IPR000926">
    <property type="entry name" value="RibA"/>
</dbReference>
<dbReference type="InterPro" id="IPR036144">
    <property type="entry name" value="RibA-like_sf"/>
</dbReference>
<dbReference type="NCBIfam" id="NF001591">
    <property type="entry name" value="PRK00393.1"/>
    <property type="match status" value="1"/>
</dbReference>
<dbReference type="NCBIfam" id="TIGR00505">
    <property type="entry name" value="ribA"/>
    <property type="match status" value="1"/>
</dbReference>
<dbReference type="PANTHER" id="PTHR21327:SF18">
    <property type="entry name" value="3,4-DIHYDROXY-2-BUTANONE 4-PHOSPHATE SYNTHASE"/>
    <property type="match status" value="1"/>
</dbReference>
<dbReference type="PANTHER" id="PTHR21327">
    <property type="entry name" value="GTP CYCLOHYDROLASE II-RELATED"/>
    <property type="match status" value="1"/>
</dbReference>
<dbReference type="Pfam" id="PF00925">
    <property type="entry name" value="GTP_cyclohydro2"/>
    <property type="match status" value="1"/>
</dbReference>
<dbReference type="SUPFAM" id="SSF142695">
    <property type="entry name" value="RibA-like"/>
    <property type="match status" value="1"/>
</dbReference>
<proteinExistence type="inferred from homology"/>
<evidence type="ECO:0000255" key="1">
    <source>
        <dbReference type="HAMAP-Rule" id="MF_00179"/>
    </source>
</evidence>
<name>RIBA_HELHP</name>
<reference key="1">
    <citation type="journal article" date="2003" name="Proc. Natl. Acad. Sci. U.S.A.">
        <title>The complete genome sequence of the carcinogenic bacterium Helicobacter hepaticus.</title>
        <authorList>
            <person name="Suerbaum S."/>
            <person name="Josenhans C."/>
            <person name="Sterzenbach T."/>
            <person name="Drescher B."/>
            <person name="Brandt P."/>
            <person name="Bell M."/>
            <person name="Droege M."/>
            <person name="Fartmann B."/>
            <person name="Fischer H.-P."/>
            <person name="Ge Z."/>
            <person name="Hoerster A."/>
            <person name="Holland R."/>
            <person name="Klein K."/>
            <person name="Koenig J."/>
            <person name="Macko L."/>
            <person name="Mendz G.L."/>
            <person name="Nyakatura G."/>
            <person name="Schauer D.B."/>
            <person name="Shen Z."/>
            <person name="Weber J."/>
            <person name="Frosch M."/>
            <person name="Fox J.G."/>
        </authorList>
    </citation>
    <scope>NUCLEOTIDE SEQUENCE [LARGE SCALE GENOMIC DNA]</scope>
    <source>
        <strain>ATCC 51449 / 3B1</strain>
    </source>
</reference>
<accession>Q7VK48</accession>
<gene>
    <name evidence="1" type="primary">ribA</name>
    <name type="ordered locus">HH_0044</name>
</gene>
<sequence length="194" mass="21996">MKYEISEQAKLPTRFGNFFTKSFREYGKNNTLFEHLVVFTHTLGETPLVRIHSECLTGDVFGSKKCDCGNELALAMEQIAHNTEGGMLIYLRQEGRGIGLFNKINAYALQDKGYDTVEANQQLGFAGDMRSYEIVGEIFKHFHITHINLLTNNPRKIDALAPYAKVVRHSIITPSNPHNQAYLEVKKQKLGHLL</sequence>